<accession>A8HQ90</accession>
<protein>
    <recommendedName>
        <fullName evidence="1">Acetyl-coenzyme A carboxylase carboxyl transferase subunit beta</fullName>
        <shortName evidence="1">ACCase subunit beta</shortName>
        <shortName evidence="1">Acetyl-CoA carboxylase carboxyltransferase subunit beta</shortName>
        <ecNumber evidence="1">2.1.3.15</ecNumber>
    </recommendedName>
</protein>
<feature type="chain" id="PRO_0000389667" description="Acetyl-coenzyme A carboxylase carboxyl transferase subunit beta">
    <location>
        <begin position="1"/>
        <end position="297"/>
    </location>
</feature>
<feature type="domain" description="CoA carboxyltransferase N-terminal" evidence="2">
    <location>
        <begin position="25"/>
        <end position="294"/>
    </location>
</feature>
<proteinExistence type="inferred from homology"/>
<organism>
    <name type="scientific">Azorhizobium caulinodans (strain ATCC 43989 / DSM 5975 / JCM 20966 / LMG 6465 / NBRC 14845 / NCIMB 13405 / ORS 571)</name>
    <dbReference type="NCBI Taxonomy" id="438753"/>
    <lineage>
        <taxon>Bacteria</taxon>
        <taxon>Pseudomonadati</taxon>
        <taxon>Pseudomonadota</taxon>
        <taxon>Alphaproteobacteria</taxon>
        <taxon>Hyphomicrobiales</taxon>
        <taxon>Xanthobacteraceae</taxon>
        <taxon>Azorhizobium</taxon>
    </lineage>
</organism>
<sequence length="297" mass="32660">MNWISNVVRPKIRSFLNRRDVPENLWVKCPETGQMVFHKDLEANQYVIPGSGFHMRMGPADRLKATFDDGAYEEVALPDVPIDPLKFRDERRYIDRLKDARAKTGAQDAVKVAHGLLEGLPVTVAVQDFGFMGGSLGMAAGEAVVTGLFTAAEKKTPFIMFAASGGARMQEGILSLMQMPRTTVAIQELREARLPYIVVLTNPTTGGVTASYAMLGDVQIAEPGALIGFAGPRVIEQTIREKLPDGFQRSEYLFEHGMIDMVVHRHQMRETLARVCRLMMKAPGVPPKGRLPAPAAA</sequence>
<gene>
    <name evidence="1" type="primary">accD</name>
    <name type="ordered locus">AZC_1024</name>
</gene>
<dbReference type="EC" id="2.1.3.15" evidence="1"/>
<dbReference type="EMBL" id="AP009384">
    <property type="protein sequence ID" value="BAF87022.1"/>
    <property type="molecule type" value="Genomic_DNA"/>
</dbReference>
<dbReference type="RefSeq" id="WP_012169555.1">
    <property type="nucleotide sequence ID" value="NC_009937.1"/>
</dbReference>
<dbReference type="SMR" id="A8HQ90"/>
<dbReference type="STRING" id="438753.AZC_1024"/>
<dbReference type="KEGG" id="azc:AZC_1024"/>
<dbReference type="eggNOG" id="COG0777">
    <property type="taxonomic scope" value="Bacteria"/>
</dbReference>
<dbReference type="HOGENOM" id="CLU_015486_1_0_5"/>
<dbReference type="UniPathway" id="UPA00655">
    <property type="reaction ID" value="UER00711"/>
</dbReference>
<dbReference type="Proteomes" id="UP000000270">
    <property type="component" value="Chromosome"/>
</dbReference>
<dbReference type="GO" id="GO:0009329">
    <property type="term" value="C:acetate CoA-transferase complex"/>
    <property type="evidence" value="ECO:0007669"/>
    <property type="project" value="TreeGrafter"/>
</dbReference>
<dbReference type="GO" id="GO:0003989">
    <property type="term" value="F:acetyl-CoA carboxylase activity"/>
    <property type="evidence" value="ECO:0007669"/>
    <property type="project" value="InterPro"/>
</dbReference>
<dbReference type="GO" id="GO:0005524">
    <property type="term" value="F:ATP binding"/>
    <property type="evidence" value="ECO:0007669"/>
    <property type="project" value="UniProtKB-KW"/>
</dbReference>
<dbReference type="GO" id="GO:0016743">
    <property type="term" value="F:carboxyl- or carbamoyltransferase activity"/>
    <property type="evidence" value="ECO:0007669"/>
    <property type="project" value="UniProtKB-UniRule"/>
</dbReference>
<dbReference type="GO" id="GO:0006633">
    <property type="term" value="P:fatty acid biosynthetic process"/>
    <property type="evidence" value="ECO:0007669"/>
    <property type="project" value="UniProtKB-KW"/>
</dbReference>
<dbReference type="GO" id="GO:2001295">
    <property type="term" value="P:malonyl-CoA biosynthetic process"/>
    <property type="evidence" value="ECO:0007669"/>
    <property type="project" value="UniProtKB-UniRule"/>
</dbReference>
<dbReference type="Gene3D" id="3.90.226.10">
    <property type="entry name" value="2-enoyl-CoA Hydratase, Chain A, domain 1"/>
    <property type="match status" value="1"/>
</dbReference>
<dbReference type="HAMAP" id="MF_01395">
    <property type="entry name" value="AcetylCoA_CT_beta"/>
    <property type="match status" value="1"/>
</dbReference>
<dbReference type="InterPro" id="IPR034733">
    <property type="entry name" value="AcCoA_carboxyl_beta"/>
</dbReference>
<dbReference type="InterPro" id="IPR000438">
    <property type="entry name" value="Acetyl_CoA_COase_Trfase_b_su"/>
</dbReference>
<dbReference type="InterPro" id="IPR029045">
    <property type="entry name" value="ClpP/crotonase-like_dom_sf"/>
</dbReference>
<dbReference type="InterPro" id="IPR011762">
    <property type="entry name" value="COA_CT_N"/>
</dbReference>
<dbReference type="NCBIfam" id="TIGR00515">
    <property type="entry name" value="accD"/>
    <property type="match status" value="1"/>
</dbReference>
<dbReference type="PANTHER" id="PTHR42995">
    <property type="entry name" value="ACETYL-COENZYME A CARBOXYLASE CARBOXYL TRANSFERASE SUBUNIT BETA, CHLOROPLASTIC"/>
    <property type="match status" value="1"/>
</dbReference>
<dbReference type="PANTHER" id="PTHR42995:SF5">
    <property type="entry name" value="ACETYL-COENZYME A CARBOXYLASE CARBOXYL TRANSFERASE SUBUNIT BETA, CHLOROPLASTIC"/>
    <property type="match status" value="1"/>
</dbReference>
<dbReference type="Pfam" id="PF01039">
    <property type="entry name" value="Carboxyl_trans"/>
    <property type="match status" value="1"/>
</dbReference>
<dbReference type="PRINTS" id="PR01070">
    <property type="entry name" value="ACCCTRFRASEB"/>
</dbReference>
<dbReference type="SUPFAM" id="SSF52096">
    <property type="entry name" value="ClpP/crotonase"/>
    <property type="match status" value="1"/>
</dbReference>
<dbReference type="PROSITE" id="PS50980">
    <property type="entry name" value="COA_CT_NTER"/>
    <property type="match status" value="1"/>
</dbReference>
<name>ACCD_AZOC5</name>
<reference key="1">
    <citation type="submission" date="2007-04" db="EMBL/GenBank/DDBJ databases">
        <title>Complete genome sequence of the nitrogen-fixing bacterium Azorhizobium caulinodans ORS571.</title>
        <authorList>
            <person name="Lee K.B."/>
            <person name="Backer P.D."/>
            <person name="Aono T."/>
            <person name="Liu C.T."/>
            <person name="Suzuki S."/>
            <person name="Suzuki T."/>
            <person name="Kaneko T."/>
            <person name="Yamada M."/>
            <person name="Tabata S."/>
            <person name="Kupfer D.M."/>
            <person name="Najar F.Z."/>
            <person name="Wiley G.B."/>
            <person name="Roe B."/>
            <person name="Binnewies T."/>
            <person name="Ussery D."/>
            <person name="Vereecke D."/>
            <person name="Gevers D."/>
            <person name="Holsters M."/>
            <person name="Oyaizu H."/>
        </authorList>
    </citation>
    <scope>NUCLEOTIDE SEQUENCE [LARGE SCALE GENOMIC DNA]</scope>
    <source>
        <strain>ATCC 43989 / DSM 5975 / JCM 20966 / LMG 6465 / NBRC 14845 / NCIMB 13405 / ORS 571</strain>
    </source>
</reference>
<keyword id="KW-0067">ATP-binding</keyword>
<keyword id="KW-0963">Cytoplasm</keyword>
<keyword id="KW-0275">Fatty acid biosynthesis</keyword>
<keyword id="KW-0276">Fatty acid metabolism</keyword>
<keyword id="KW-0444">Lipid biosynthesis</keyword>
<keyword id="KW-0443">Lipid metabolism</keyword>
<keyword id="KW-0547">Nucleotide-binding</keyword>
<keyword id="KW-1185">Reference proteome</keyword>
<keyword id="KW-0808">Transferase</keyword>
<evidence type="ECO:0000255" key="1">
    <source>
        <dbReference type="HAMAP-Rule" id="MF_01395"/>
    </source>
</evidence>
<evidence type="ECO:0000255" key="2">
    <source>
        <dbReference type="PROSITE-ProRule" id="PRU01136"/>
    </source>
</evidence>
<comment type="function">
    <text evidence="1">Component of the acetyl coenzyme A carboxylase (ACC) complex. Biotin carboxylase (BC) catalyzes the carboxylation of biotin on its carrier protein (BCCP) and then the CO(2) group is transferred by the transcarboxylase to acetyl-CoA to form malonyl-CoA.</text>
</comment>
<comment type="catalytic activity">
    <reaction evidence="1">
        <text>N(6)-carboxybiotinyl-L-lysyl-[protein] + acetyl-CoA = N(6)-biotinyl-L-lysyl-[protein] + malonyl-CoA</text>
        <dbReference type="Rhea" id="RHEA:54728"/>
        <dbReference type="Rhea" id="RHEA-COMP:10505"/>
        <dbReference type="Rhea" id="RHEA-COMP:10506"/>
        <dbReference type="ChEBI" id="CHEBI:57288"/>
        <dbReference type="ChEBI" id="CHEBI:57384"/>
        <dbReference type="ChEBI" id="CHEBI:83144"/>
        <dbReference type="ChEBI" id="CHEBI:83145"/>
        <dbReference type="EC" id="2.1.3.15"/>
    </reaction>
</comment>
<comment type="pathway">
    <text evidence="1">Lipid metabolism; malonyl-CoA biosynthesis; malonyl-CoA from acetyl-CoA: step 1/1.</text>
</comment>
<comment type="subunit">
    <text evidence="1">Acetyl-CoA carboxylase is a heterohexamer composed of biotin carboxyl carrier protein (AccB), biotin carboxylase (AccC) and two subunits each of ACCase subunit alpha (AccA) and ACCase subunit beta (AccD).</text>
</comment>
<comment type="subcellular location">
    <subcellularLocation>
        <location evidence="1">Cytoplasm</location>
    </subcellularLocation>
</comment>
<comment type="similarity">
    <text evidence="1">Belongs to the AccD/PCCB family.</text>
</comment>